<reference key="1">
    <citation type="journal article" date="2001" name="Nature">
        <title>Complete genome sequence of a multiple drug resistant Salmonella enterica serovar Typhi CT18.</title>
        <authorList>
            <person name="Parkhill J."/>
            <person name="Dougan G."/>
            <person name="James K.D."/>
            <person name="Thomson N.R."/>
            <person name="Pickard D."/>
            <person name="Wain J."/>
            <person name="Churcher C.M."/>
            <person name="Mungall K.L."/>
            <person name="Bentley S.D."/>
            <person name="Holden M.T.G."/>
            <person name="Sebaihia M."/>
            <person name="Baker S."/>
            <person name="Basham D."/>
            <person name="Brooks K."/>
            <person name="Chillingworth T."/>
            <person name="Connerton P."/>
            <person name="Cronin A."/>
            <person name="Davis P."/>
            <person name="Davies R.M."/>
            <person name="Dowd L."/>
            <person name="White N."/>
            <person name="Farrar J."/>
            <person name="Feltwell T."/>
            <person name="Hamlin N."/>
            <person name="Haque A."/>
            <person name="Hien T.T."/>
            <person name="Holroyd S."/>
            <person name="Jagels K."/>
            <person name="Krogh A."/>
            <person name="Larsen T.S."/>
            <person name="Leather S."/>
            <person name="Moule S."/>
            <person name="O'Gaora P."/>
            <person name="Parry C."/>
            <person name="Quail M.A."/>
            <person name="Rutherford K.M."/>
            <person name="Simmonds M."/>
            <person name="Skelton J."/>
            <person name="Stevens K."/>
            <person name="Whitehead S."/>
            <person name="Barrell B.G."/>
        </authorList>
    </citation>
    <scope>NUCLEOTIDE SEQUENCE [LARGE SCALE GENOMIC DNA]</scope>
    <source>
        <strain>CT18</strain>
    </source>
</reference>
<reference key="2">
    <citation type="journal article" date="2003" name="J. Bacteriol.">
        <title>Comparative genomics of Salmonella enterica serovar Typhi strains Ty2 and CT18.</title>
        <authorList>
            <person name="Deng W."/>
            <person name="Liou S.-R."/>
            <person name="Plunkett G. III"/>
            <person name="Mayhew G.F."/>
            <person name="Rose D.J."/>
            <person name="Burland V."/>
            <person name="Kodoyianni V."/>
            <person name="Schwartz D.C."/>
            <person name="Blattner F.R."/>
        </authorList>
    </citation>
    <scope>NUCLEOTIDE SEQUENCE [LARGE SCALE GENOMIC DNA]</scope>
    <source>
        <strain>ATCC 700931 / Ty2</strain>
    </source>
</reference>
<gene>
    <name evidence="2" type="primary">cysI</name>
    <name type="ordered locus">STY3075</name>
    <name type="ordered locus">t2848</name>
</gene>
<sequence>MSEKYPGPLVVEGKLSDAERMKLESNYLRGTIAEDLNDGLTGGFKGDNFLLIRFHGMYQQDDRDIRAERAAQKLEPRHAMLLRCRLPGGVITTTQWQAIDKFAADNTIYGSIRLTNRQTFQFHGILKKNVKPVHQMLHSVGLDALATANDMNRNVLCTSNPYESELHAEAYEWAKKISEHLLPRTRAYAEIWLDQEKVATTDEEPILGQTYLPRKFKTTVVIPPQNDIDLHANDMNFVAIAENGKLVGFNLLVGGGLSIEHGNKKTYARTASEFGYLPLEHTLAVAEAVVTTQRDWGNRTDRKNAKTKYTLERVGLETFKAEVERRAGITFEPIRPYEFTGRGDRIGWVKGIDDKWHLTLFIENGRILDYPGRPLKTGLLEIAKIHQGEFRITANQNLIIASVPESQKAKIEKLARDHGLMNAVSAQRENSMACVSFPTCPLAMAEAERFLPSFTDKVEAILEKHGIPDEHIVMRVTGCPNGCGRAMLAEIGLVGKAPGRYNLHLGGNRIGSRIPRMYQENITEPDIQASLDELIGRWAKEREAGEGFGDFTVRAGIIRPVLDPARDFWE</sequence>
<dbReference type="EC" id="1.8.1.2" evidence="2"/>
<dbReference type="EMBL" id="AL513382">
    <property type="protein sequence ID" value="CAD06053.1"/>
    <property type="molecule type" value="Genomic_DNA"/>
</dbReference>
<dbReference type="EMBL" id="AE014613">
    <property type="protein sequence ID" value="AAO70405.1"/>
    <property type="molecule type" value="Genomic_DNA"/>
</dbReference>
<dbReference type="RefSeq" id="NP_457336.1">
    <property type="nucleotide sequence ID" value="NC_003198.1"/>
</dbReference>
<dbReference type="RefSeq" id="WP_001291998.1">
    <property type="nucleotide sequence ID" value="NZ_WSUR01000005.1"/>
</dbReference>
<dbReference type="SMR" id="Q8Z459"/>
<dbReference type="STRING" id="220341.gene:17586963"/>
<dbReference type="KEGG" id="stt:t2848"/>
<dbReference type="KEGG" id="sty:STY3075"/>
<dbReference type="PATRIC" id="fig|220341.7.peg.3128"/>
<dbReference type="eggNOG" id="COG0155">
    <property type="taxonomic scope" value="Bacteria"/>
</dbReference>
<dbReference type="HOGENOM" id="CLU_001975_3_2_6"/>
<dbReference type="OMA" id="IKISGCM"/>
<dbReference type="OrthoDB" id="3189055at2"/>
<dbReference type="UniPathway" id="UPA00140">
    <property type="reaction ID" value="UER00207"/>
</dbReference>
<dbReference type="Proteomes" id="UP000000541">
    <property type="component" value="Chromosome"/>
</dbReference>
<dbReference type="Proteomes" id="UP000002670">
    <property type="component" value="Chromosome"/>
</dbReference>
<dbReference type="GO" id="GO:0009337">
    <property type="term" value="C:sulfite reductase complex (NADPH)"/>
    <property type="evidence" value="ECO:0007669"/>
    <property type="project" value="InterPro"/>
</dbReference>
<dbReference type="GO" id="GO:0051539">
    <property type="term" value="F:4 iron, 4 sulfur cluster binding"/>
    <property type="evidence" value="ECO:0007669"/>
    <property type="project" value="UniProtKB-KW"/>
</dbReference>
<dbReference type="GO" id="GO:0020037">
    <property type="term" value="F:heme binding"/>
    <property type="evidence" value="ECO:0007669"/>
    <property type="project" value="InterPro"/>
</dbReference>
<dbReference type="GO" id="GO:0046872">
    <property type="term" value="F:metal ion binding"/>
    <property type="evidence" value="ECO:0007669"/>
    <property type="project" value="UniProtKB-KW"/>
</dbReference>
<dbReference type="GO" id="GO:0050661">
    <property type="term" value="F:NADP binding"/>
    <property type="evidence" value="ECO:0007669"/>
    <property type="project" value="InterPro"/>
</dbReference>
<dbReference type="GO" id="GO:0050311">
    <property type="term" value="F:sulfite reductase (ferredoxin) activity"/>
    <property type="evidence" value="ECO:0007669"/>
    <property type="project" value="TreeGrafter"/>
</dbReference>
<dbReference type="GO" id="GO:0004783">
    <property type="term" value="F:sulfite reductase (NADPH) activity"/>
    <property type="evidence" value="ECO:0007669"/>
    <property type="project" value="UniProtKB-UniRule"/>
</dbReference>
<dbReference type="GO" id="GO:0019344">
    <property type="term" value="P:cysteine biosynthetic process"/>
    <property type="evidence" value="ECO:0007669"/>
    <property type="project" value="UniProtKB-KW"/>
</dbReference>
<dbReference type="GO" id="GO:0070814">
    <property type="term" value="P:hydrogen sulfide biosynthetic process"/>
    <property type="evidence" value="ECO:0007669"/>
    <property type="project" value="UniProtKB-UniRule"/>
</dbReference>
<dbReference type="GO" id="GO:0000103">
    <property type="term" value="P:sulfate assimilation"/>
    <property type="evidence" value="ECO:0007669"/>
    <property type="project" value="UniProtKB-UniRule"/>
</dbReference>
<dbReference type="FunFam" id="3.30.413.10:FF:000003">
    <property type="entry name" value="Sulfite reductase [NADPH] hemoprotein beta-component"/>
    <property type="match status" value="1"/>
</dbReference>
<dbReference type="FunFam" id="3.30.413.10:FF:000004">
    <property type="entry name" value="Sulfite reductase [NADPH] hemoprotein beta-component"/>
    <property type="match status" value="1"/>
</dbReference>
<dbReference type="Gene3D" id="3.30.413.10">
    <property type="entry name" value="Sulfite Reductase Hemoprotein, domain 1"/>
    <property type="match status" value="2"/>
</dbReference>
<dbReference type="HAMAP" id="MF_01540">
    <property type="entry name" value="CysI"/>
    <property type="match status" value="1"/>
</dbReference>
<dbReference type="InterPro" id="IPR011786">
    <property type="entry name" value="CysI"/>
</dbReference>
<dbReference type="InterPro" id="IPR005117">
    <property type="entry name" value="NiRdtase/SiRdtase_haem-b_fer"/>
</dbReference>
<dbReference type="InterPro" id="IPR036136">
    <property type="entry name" value="Nit/Sulf_reduc_fer-like_dom_sf"/>
</dbReference>
<dbReference type="InterPro" id="IPR006067">
    <property type="entry name" value="NO2/SO3_Rdtase_4Fe4S_dom"/>
</dbReference>
<dbReference type="InterPro" id="IPR045169">
    <property type="entry name" value="NO2/SO3_Rdtase_4Fe4S_prot"/>
</dbReference>
<dbReference type="InterPro" id="IPR045854">
    <property type="entry name" value="NO2/SO3_Rdtase_4Fe4S_sf"/>
</dbReference>
<dbReference type="InterPro" id="IPR006066">
    <property type="entry name" value="NO2/SO3_Rdtase_FeS/sirohaem_BS"/>
</dbReference>
<dbReference type="NCBIfam" id="TIGR02041">
    <property type="entry name" value="CysI"/>
    <property type="match status" value="1"/>
</dbReference>
<dbReference type="NCBIfam" id="NF010029">
    <property type="entry name" value="PRK13504.1"/>
    <property type="match status" value="1"/>
</dbReference>
<dbReference type="PANTHER" id="PTHR11493:SF47">
    <property type="entry name" value="SULFITE REDUCTASE [NADPH] SUBUNIT BETA"/>
    <property type="match status" value="1"/>
</dbReference>
<dbReference type="PANTHER" id="PTHR11493">
    <property type="entry name" value="SULFITE REDUCTASE [NADPH] SUBUNIT BETA-RELATED"/>
    <property type="match status" value="1"/>
</dbReference>
<dbReference type="Pfam" id="PF01077">
    <property type="entry name" value="NIR_SIR"/>
    <property type="match status" value="1"/>
</dbReference>
<dbReference type="Pfam" id="PF03460">
    <property type="entry name" value="NIR_SIR_ferr"/>
    <property type="match status" value="2"/>
</dbReference>
<dbReference type="PRINTS" id="PR00397">
    <property type="entry name" value="SIROHAEM"/>
</dbReference>
<dbReference type="SUPFAM" id="SSF56014">
    <property type="entry name" value="Nitrite and sulphite reductase 4Fe-4S domain-like"/>
    <property type="match status" value="2"/>
</dbReference>
<dbReference type="SUPFAM" id="SSF55124">
    <property type="entry name" value="Nitrite/Sulfite reductase N-terminal domain-like"/>
    <property type="match status" value="2"/>
</dbReference>
<dbReference type="PROSITE" id="PS00365">
    <property type="entry name" value="NIR_SIR"/>
    <property type="match status" value="1"/>
</dbReference>
<protein>
    <recommendedName>
        <fullName evidence="2">Sulfite reductase [NADPH] hemoprotein beta-component</fullName>
        <shortName evidence="2">SiR-HP</shortName>
        <shortName evidence="2">SiRHP</shortName>
        <ecNumber evidence="2">1.8.1.2</ecNumber>
    </recommendedName>
</protein>
<proteinExistence type="inferred from homology"/>
<comment type="function">
    <text evidence="2">Component of the sulfite reductase complex that catalyzes the 6-electron reduction of sulfite to sulfide. This is one of several activities required for the biosynthesis of L-cysteine from sulfate.</text>
</comment>
<comment type="catalytic activity">
    <reaction evidence="2">
        <text>hydrogen sulfide + 3 NADP(+) + 3 H2O = sulfite + 3 NADPH + 4 H(+)</text>
        <dbReference type="Rhea" id="RHEA:13801"/>
        <dbReference type="ChEBI" id="CHEBI:15377"/>
        <dbReference type="ChEBI" id="CHEBI:15378"/>
        <dbReference type="ChEBI" id="CHEBI:17359"/>
        <dbReference type="ChEBI" id="CHEBI:29919"/>
        <dbReference type="ChEBI" id="CHEBI:57783"/>
        <dbReference type="ChEBI" id="CHEBI:58349"/>
        <dbReference type="EC" id="1.8.1.2"/>
    </reaction>
</comment>
<comment type="cofactor">
    <cofactor evidence="2">
        <name>siroheme</name>
        <dbReference type="ChEBI" id="CHEBI:60052"/>
    </cofactor>
    <text evidence="2">Binds 1 siroheme per subunit.</text>
</comment>
<comment type="cofactor">
    <cofactor evidence="2">
        <name>[4Fe-4S] cluster</name>
        <dbReference type="ChEBI" id="CHEBI:49883"/>
    </cofactor>
    <text evidence="2">Binds 1 [4Fe-4S] cluster per subunit.</text>
</comment>
<comment type="pathway">
    <text evidence="2">Sulfur metabolism; hydrogen sulfide biosynthesis; hydrogen sulfide from sulfite (NADPH route): step 1/1.</text>
</comment>
<comment type="subunit">
    <text evidence="2">Alpha(8)-beta(8). The alpha component is a flavoprotein, the beta component is a hemoprotein.</text>
</comment>
<comment type="similarity">
    <text evidence="2">Belongs to the nitrite and sulfite reductase 4Fe-4S domain family.</text>
</comment>
<evidence type="ECO:0000250" key="1"/>
<evidence type="ECO:0000255" key="2">
    <source>
        <dbReference type="HAMAP-Rule" id="MF_01540"/>
    </source>
</evidence>
<accession>Q8Z459</accession>
<accession>Q7C7K1</accession>
<organism>
    <name type="scientific">Salmonella typhi</name>
    <dbReference type="NCBI Taxonomy" id="90370"/>
    <lineage>
        <taxon>Bacteria</taxon>
        <taxon>Pseudomonadati</taxon>
        <taxon>Pseudomonadota</taxon>
        <taxon>Gammaproteobacteria</taxon>
        <taxon>Enterobacterales</taxon>
        <taxon>Enterobacteriaceae</taxon>
        <taxon>Salmonella</taxon>
    </lineage>
</organism>
<name>CYSI_SALTI</name>
<feature type="initiator methionine" description="Removed" evidence="1">
    <location>
        <position position="1"/>
    </location>
</feature>
<feature type="chain" id="PRO_0000199907" description="Sulfite reductase [NADPH] hemoprotein beta-component">
    <location>
        <begin position="2"/>
        <end position="570"/>
    </location>
</feature>
<feature type="binding site" evidence="2">
    <location>
        <position position="434"/>
    </location>
    <ligand>
        <name>[4Fe-4S] cluster</name>
        <dbReference type="ChEBI" id="CHEBI:49883"/>
    </ligand>
</feature>
<feature type="binding site" evidence="2">
    <location>
        <position position="440"/>
    </location>
    <ligand>
        <name>[4Fe-4S] cluster</name>
        <dbReference type="ChEBI" id="CHEBI:49883"/>
    </ligand>
</feature>
<feature type="binding site" evidence="2">
    <location>
        <position position="479"/>
    </location>
    <ligand>
        <name>[4Fe-4S] cluster</name>
        <dbReference type="ChEBI" id="CHEBI:49883"/>
    </ligand>
</feature>
<feature type="binding site" evidence="2">
    <location>
        <position position="483"/>
    </location>
    <ligand>
        <name>[4Fe-4S] cluster</name>
        <dbReference type="ChEBI" id="CHEBI:49883"/>
    </ligand>
</feature>
<feature type="binding site" description="axial binding residue" evidence="2">
    <location>
        <position position="483"/>
    </location>
    <ligand>
        <name>siroheme</name>
        <dbReference type="ChEBI" id="CHEBI:60052"/>
    </ligand>
    <ligandPart>
        <name>Fe</name>
        <dbReference type="ChEBI" id="CHEBI:18248"/>
    </ligandPart>
</feature>
<keyword id="KW-0004">4Fe-4S</keyword>
<keyword id="KW-0028">Amino-acid biosynthesis</keyword>
<keyword id="KW-0198">Cysteine biosynthesis</keyword>
<keyword id="KW-0349">Heme</keyword>
<keyword id="KW-0408">Iron</keyword>
<keyword id="KW-0411">Iron-sulfur</keyword>
<keyword id="KW-0479">Metal-binding</keyword>
<keyword id="KW-0521">NADP</keyword>
<keyword id="KW-0560">Oxidoreductase</keyword>